<sequence length="305" mass="32944">MELIFLGTSAGVPTRTRNVTAILLNLQHPTQSGLWLFDCGEGTQHQLLHTTFNPGKLDKIFISHLHGDHLFGLPGLLCSRSMSGIIQPLTIYGPQGIREFVETALRISGSWIDYPLEIVEIGAGEILDDGLRKVTAYPLEHPLECYGYRIEEHDKPGALNAQALKAAGVPPGPLFQALKAGKTIMLEDGRQINGADYLAAPVPGKALAIFGDTGPCDAALDLAKGVDVMVHEATLDITMEAKANSRGHSSTRQAATLAREAGVGKLIITHVSSRYDDKGCQHLLRECRSIFPATELANDFTVFNV</sequence>
<keyword id="KW-0255">Endonuclease</keyword>
<keyword id="KW-0269">Exonuclease</keyword>
<keyword id="KW-0378">Hydrolase</keyword>
<keyword id="KW-0479">Metal-binding</keyword>
<keyword id="KW-0540">Nuclease</keyword>
<keyword id="KW-0819">tRNA processing</keyword>
<keyword id="KW-0862">Zinc</keyword>
<comment type="function">
    <text evidence="1">Zinc phosphodiesterase, which has both exoribonuclease and endoribonuclease activities.</text>
</comment>
<comment type="cofactor">
    <cofactor evidence="1">
        <name>Zn(2+)</name>
        <dbReference type="ChEBI" id="CHEBI:29105"/>
    </cofactor>
    <text evidence="1">Binds 2 Zn(2+) ions.</text>
</comment>
<comment type="subunit">
    <text evidence="1">Homodimer.</text>
</comment>
<comment type="similarity">
    <text evidence="1">Belongs to the RNase Z family. RNase BN subfamily.</text>
</comment>
<feature type="chain" id="PRO_1000187958" description="Ribonuclease BN">
    <location>
        <begin position="1"/>
        <end position="305"/>
    </location>
</feature>
<feature type="active site" description="Proton acceptor" evidence="1">
    <location>
        <position position="68"/>
    </location>
</feature>
<feature type="binding site" evidence="1">
    <location>
        <position position="64"/>
    </location>
    <ligand>
        <name>Zn(2+)</name>
        <dbReference type="ChEBI" id="CHEBI:29105"/>
        <label>1</label>
        <note>catalytic</note>
    </ligand>
</feature>
<feature type="binding site" evidence="1">
    <location>
        <position position="66"/>
    </location>
    <ligand>
        <name>Zn(2+)</name>
        <dbReference type="ChEBI" id="CHEBI:29105"/>
        <label>1</label>
        <note>catalytic</note>
    </ligand>
</feature>
<feature type="binding site" evidence="1">
    <location>
        <position position="68"/>
    </location>
    <ligand>
        <name>Zn(2+)</name>
        <dbReference type="ChEBI" id="CHEBI:29105"/>
        <label>2</label>
        <note>catalytic</note>
    </ligand>
</feature>
<feature type="binding site" evidence="1">
    <location>
        <position position="69"/>
    </location>
    <ligand>
        <name>Zn(2+)</name>
        <dbReference type="ChEBI" id="CHEBI:29105"/>
        <label>2</label>
        <note>catalytic</note>
    </ligand>
</feature>
<feature type="binding site" evidence="1">
    <location>
        <position position="141"/>
    </location>
    <ligand>
        <name>Zn(2+)</name>
        <dbReference type="ChEBI" id="CHEBI:29105"/>
        <label>1</label>
        <note>catalytic</note>
    </ligand>
</feature>
<feature type="binding site" evidence="1">
    <location>
        <position position="212"/>
    </location>
    <ligand>
        <name>Zn(2+)</name>
        <dbReference type="ChEBI" id="CHEBI:29105"/>
        <label>1</label>
        <note>catalytic</note>
    </ligand>
</feature>
<feature type="binding site" evidence="1">
    <location>
        <position position="212"/>
    </location>
    <ligand>
        <name>Zn(2+)</name>
        <dbReference type="ChEBI" id="CHEBI:29105"/>
        <label>2</label>
        <note>catalytic</note>
    </ligand>
</feature>
<feature type="binding site" evidence="1">
    <location>
        <position position="270"/>
    </location>
    <ligand>
        <name>Zn(2+)</name>
        <dbReference type="ChEBI" id="CHEBI:29105"/>
        <label>2</label>
        <note>catalytic</note>
    </ligand>
</feature>
<name>RBN_ECOLU</name>
<evidence type="ECO:0000255" key="1">
    <source>
        <dbReference type="HAMAP-Rule" id="MF_01818"/>
    </source>
</evidence>
<accession>B7N5N4</accession>
<proteinExistence type="inferred from homology"/>
<organism>
    <name type="scientific">Escherichia coli O17:K52:H18 (strain UMN026 / ExPEC)</name>
    <dbReference type="NCBI Taxonomy" id="585056"/>
    <lineage>
        <taxon>Bacteria</taxon>
        <taxon>Pseudomonadati</taxon>
        <taxon>Pseudomonadota</taxon>
        <taxon>Gammaproteobacteria</taxon>
        <taxon>Enterobacterales</taxon>
        <taxon>Enterobacteriaceae</taxon>
        <taxon>Escherichia</taxon>
    </lineage>
</organism>
<dbReference type="EC" id="3.1.-.-" evidence="1"/>
<dbReference type="EMBL" id="CU928163">
    <property type="protein sequence ID" value="CAR13793.1"/>
    <property type="molecule type" value="Genomic_DNA"/>
</dbReference>
<dbReference type="RefSeq" id="WP_001306464.1">
    <property type="nucleotide sequence ID" value="NC_011751.1"/>
</dbReference>
<dbReference type="RefSeq" id="YP_002413321.1">
    <property type="nucleotide sequence ID" value="NC_011751.1"/>
</dbReference>
<dbReference type="SMR" id="B7N5N4"/>
<dbReference type="STRING" id="585056.ECUMN_2611"/>
<dbReference type="KEGG" id="eum:ECUMN_2611"/>
<dbReference type="PATRIC" id="fig|585056.7.peg.2791"/>
<dbReference type="HOGENOM" id="CLU_031317_2_0_6"/>
<dbReference type="Proteomes" id="UP000007097">
    <property type="component" value="Chromosome"/>
</dbReference>
<dbReference type="GO" id="GO:0042781">
    <property type="term" value="F:3'-tRNA processing endoribonuclease activity"/>
    <property type="evidence" value="ECO:0007669"/>
    <property type="project" value="TreeGrafter"/>
</dbReference>
<dbReference type="GO" id="GO:0004527">
    <property type="term" value="F:exonuclease activity"/>
    <property type="evidence" value="ECO:0007669"/>
    <property type="project" value="UniProtKB-UniRule"/>
</dbReference>
<dbReference type="GO" id="GO:0008270">
    <property type="term" value="F:zinc ion binding"/>
    <property type="evidence" value="ECO:0007669"/>
    <property type="project" value="UniProtKB-UniRule"/>
</dbReference>
<dbReference type="CDD" id="cd07717">
    <property type="entry name" value="RNaseZ_ZiPD-like_MBL-fold"/>
    <property type="match status" value="1"/>
</dbReference>
<dbReference type="FunFam" id="3.60.15.10:FF:000002">
    <property type="entry name" value="Ribonuclease Z"/>
    <property type="match status" value="1"/>
</dbReference>
<dbReference type="Gene3D" id="3.60.15.10">
    <property type="entry name" value="Ribonuclease Z/Hydroxyacylglutathione hydrolase-like"/>
    <property type="match status" value="1"/>
</dbReference>
<dbReference type="HAMAP" id="MF_01818">
    <property type="entry name" value="RNase_Z_BN"/>
    <property type="match status" value="1"/>
</dbReference>
<dbReference type="InterPro" id="IPR001279">
    <property type="entry name" value="Metallo-B-lactamas"/>
</dbReference>
<dbReference type="InterPro" id="IPR036866">
    <property type="entry name" value="RibonucZ/Hydroxyglut_hydro"/>
</dbReference>
<dbReference type="InterPro" id="IPR013469">
    <property type="entry name" value="Rnase_BN"/>
</dbReference>
<dbReference type="InterPro" id="IPR013471">
    <property type="entry name" value="RNase_Z/BN"/>
</dbReference>
<dbReference type="NCBIfam" id="NF000800">
    <property type="entry name" value="PRK00055.1-1"/>
    <property type="match status" value="1"/>
</dbReference>
<dbReference type="NCBIfam" id="NF000801">
    <property type="entry name" value="PRK00055.1-3"/>
    <property type="match status" value="1"/>
</dbReference>
<dbReference type="NCBIfam" id="TIGR02651">
    <property type="entry name" value="RNase_Z"/>
    <property type="match status" value="1"/>
</dbReference>
<dbReference type="NCBIfam" id="TIGR02649">
    <property type="entry name" value="true_RNase_BN"/>
    <property type="match status" value="1"/>
</dbReference>
<dbReference type="PANTHER" id="PTHR46018">
    <property type="entry name" value="ZINC PHOSPHODIESTERASE ELAC PROTEIN 1"/>
    <property type="match status" value="1"/>
</dbReference>
<dbReference type="PANTHER" id="PTHR46018:SF2">
    <property type="entry name" value="ZINC PHOSPHODIESTERASE ELAC PROTEIN 1"/>
    <property type="match status" value="1"/>
</dbReference>
<dbReference type="Pfam" id="PF12706">
    <property type="entry name" value="Lactamase_B_2"/>
    <property type="match status" value="1"/>
</dbReference>
<dbReference type="SUPFAM" id="SSF56281">
    <property type="entry name" value="Metallo-hydrolase/oxidoreductase"/>
    <property type="match status" value="1"/>
</dbReference>
<reference key="1">
    <citation type="journal article" date="2009" name="PLoS Genet.">
        <title>Organised genome dynamics in the Escherichia coli species results in highly diverse adaptive paths.</title>
        <authorList>
            <person name="Touchon M."/>
            <person name="Hoede C."/>
            <person name="Tenaillon O."/>
            <person name="Barbe V."/>
            <person name="Baeriswyl S."/>
            <person name="Bidet P."/>
            <person name="Bingen E."/>
            <person name="Bonacorsi S."/>
            <person name="Bouchier C."/>
            <person name="Bouvet O."/>
            <person name="Calteau A."/>
            <person name="Chiapello H."/>
            <person name="Clermont O."/>
            <person name="Cruveiller S."/>
            <person name="Danchin A."/>
            <person name="Diard M."/>
            <person name="Dossat C."/>
            <person name="Karoui M.E."/>
            <person name="Frapy E."/>
            <person name="Garry L."/>
            <person name="Ghigo J.M."/>
            <person name="Gilles A.M."/>
            <person name="Johnson J."/>
            <person name="Le Bouguenec C."/>
            <person name="Lescat M."/>
            <person name="Mangenot S."/>
            <person name="Martinez-Jehanne V."/>
            <person name="Matic I."/>
            <person name="Nassif X."/>
            <person name="Oztas S."/>
            <person name="Petit M.A."/>
            <person name="Pichon C."/>
            <person name="Rouy Z."/>
            <person name="Ruf C.S."/>
            <person name="Schneider D."/>
            <person name="Tourret J."/>
            <person name="Vacherie B."/>
            <person name="Vallenet D."/>
            <person name="Medigue C."/>
            <person name="Rocha E.P.C."/>
            <person name="Denamur E."/>
        </authorList>
    </citation>
    <scope>NUCLEOTIDE SEQUENCE [LARGE SCALE GENOMIC DNA]</scope>
    <source>
        <strain>UMN026 / ExPEC</strain>
    </source>
</reference>
<protein>
    <recommendedName>
        <fullName evidence="1">Ribonuclease BN</fullName>
        <shortName evidence="1">RNase BN</shortName>
        <ecNumber evidence="1">3.1.-.-</ecNumber>
    </recommendedName>
    <alternativeName>
        <fullName evidence="1">Ribonuclease Z homolog</fullName>
        <shortName evidence="1">RNase Z homolog</shortName>
    </alternativeName>
</protein>
<gene>
    <name evidence="1" type="primary">rbn</name>
    <name type="synonym">rnz</name>
    <name type="ordered locus">ECUMN_2611</name>
</gene>